<dbReference type="EMBL" id="BX927313">
    <property type="protein sequence ID" value="CAM56318.1"/>
    <property type="molecule type" value="Genomic_DNA"/>
</dbReference>
<dbReference type="EMBL" id="BC059577">
    <property type="protein sequence ID" value="AAH59577.1"/>
    <property type="molecule type" value="mRNA"/>
</dbReference>
<dbReference type="RefSeq" id="NP_957051.1">
    <property type="nucleotide sequence ID" value="NM_200757.1"/>
</dbReference>
<dbReference type="SMR" id="A3KQQ9"/>
<dbReference type="FunCoup" id="A3KQQ9">
    <property type="interactions" value="1949"/>
</dbReference>
<dbReference type="STRING" id="7955.ENSDARP00000105698"/>
<dbReference type="PaxDb" id="7955-ENSDARP00000105698"/>
<dbReference type="PeptideAtlas" id="A3KQQ9"/>
<dbReference type="Ensembl" id="ENSDART00000122930">
    <property type="protein sequence ID" value="ENSDARP00000105698"/>
    <property type="gene ID" value="ENSDARG00000086288"/>
</dbReference>
<dbReference type="GeneID" id="393730"/>
<dbReference type="KEGG" id="dre:393730"/>
<dbReference type="AGR" id="ZFIN:ZDB-GENE-040426-1725"/>
<dbReference type="CTD" id="29106"/>
<dbReference type="ZFIN" id="ZDB-GENE-040426-1725">
    <property type="gene designation" value="scg3"/>
</dbReference>
<dbReference type="eggNOG" id="ENOG502QUJH">
    <property type="taxonomic scope" value="Eukaryota"/>
</dbReference>
<dbReference type="HOGENOM" id="CLU_031198_1_0_1"/>
<dbReference type="InParanoid" id="A3KQQ9"/>
<dbReference type="OMA" id="TDKAIHN"/>
<dbReference type="OrthoDB" id="9941750at2759"/>
<dbReference type="TreeFam" id="TF331266"/>
<dbReference type="Reactome" id="R-DRE-114608">
    <property type="pathway name" value="Platelet degranulation"/>
</dbReference>
<dbReference type="PRO" id="PR:A3KQQ9"/>
<dbReference type="Proteomes" id="UP000000437">
    <property type="component" value="Alternate scaffold 18"/>
</dbReference>
<dbReference type="Proteomes" id="UP000000437">
    <property type="component" value="Chromosome 18"/>
</dbReference>
<dbReference type="Bgee" id="ENSDARG00000086288">
    <property type="expression patterns" value="Expressed in brain and 20 other cell types or tissues"/>
</dbReference>
<dbReference type="GO" id="GO:0005576">
    <property type="term" value="C:extracellular region"/>
    <property type="evidence" value="ECO:0007669"/>
    <property type="project" value="UniProtKB-SubCell"/>
</dbReference>
<dbReference type="GO" id="GO:0030667">
    <property type="term" value="C:secretory granule membrane"/>
    <property type="evidence" value="ECO:0000318"/>
    <property type="project" value="GO_Central"/>
</dbReference>
<dbReference type="GO" id="GO:0030658">
    <property type="term" value="C:transport vesicle membrane"/>
    <property type="evidence" value="ECO:0007669"/>
    <property type="project" value="UniProtKB-SubCell"/>
</dbReference>
<dbReference type="GO" id="GO:0033366">
    <property type="term" value="P:protein localization to secretory granule"/>
    <property type="evidence" value="ECO:0000318"/>
    <property type="project" value="GO_Central"/>
</dbReference>
<dbReference type="InterPro" id="IPR026197">
    <property type="entry name" value="SCG3"/>
</dbReference>
<dbReference type="PANTHER" id="PTHR17388">
    <property type="entry name" value="SECRETOGRANIN III"/>
    <property type="match status" value="1"/>
</dbReference>
<dbReference type="PANTHER" id="PTHR17388:SF2">
    <property type="entry name" value="SECRETOGRANIN-3"/>
    <property type="match status" value="1"/>
</dbReference>
<dbReference type="Pfam" id="PF15467">
    <property type="entry name" value="SGIII"/>
    <property type="match status" value="1"/>
</dbReference>
<comment type="subcellular location">
    <subcellularLocation>
        <location evidence="1">Cytoplasmic vesicle</location>
        <location evidence="1">Secretory vesicle lumen</location>
    </subcellularLocation>
    <subcellularLocation>
        <location evidence="1">Cytoplasmic vesicle</location>
        <location evidence="1">Secretory vesicle membrane</location>
        <topology evidence="1">Peripheral membrane protein</topology>
    </subcellularLocation>
    <subcellularLocation>
        <location evidence="1">Secreted</location>
    </subcellularLocation>
    <text evidence="1">Associated with the secretory granule membrane through direct binding to cholesterol-enriched lipid rafts in intragranular conditions.</text>
</comment>
<evidence type="ECO:0000250" key="1"/>
<evidence type="ECO:0000255" key="2"/>
<evidence type="ECO:0000256" key="3">
    <source>
        <dbReference type="SAM" id="MobiDB-lite"/>
    </source>
</evidence>
<evidence type="ECO:0000305" key="4"/>
<accession>A3KQQ9</accession>
<accession>Q6PBU8</accession>
<protein>
    <recommendedName>
        <fullName>Secretogranin-3</fullName>
    </recommendedName>
    <alternativeName>
        <fullName>Secretogranin III</fullName>
        <shortName>SgIII</shortName>
    </alternativeName>
</protein>
<name>SCG3_DANRE</name>
<reference key="1">
    <citation type="journal article" date="2013" name="Nature">
        <title>The zebrafish reference genome sequence and its relationship to the human genome.</title>
        <authorList>
            <person name="Howe K."/>
            <person name="Clark M.D."/>
            <person name="Torroja C.F."/>
            <person name="Torrance J."/>
            <person name="Berthelot C."/>
            <person name="Muffato M."/>
            <person name="Collins J.E."/>
            <person name="Humphray S."/>
            <person name="McLaren K."/>
            <person name="Matthews L."/>
            <person name="McLaren S."/>
            <person name="Sealy I."/>
            <person name="Caccamo M."/>
            <person name="Churcher C."/>
            <person name="Scott C."/>
            <person name="Barrett J.C."/>
            <person name="Koch R."/>
            <person name="Rauch G.J."/>
            <person name="White S."/>
            <person name="Chow W."/>
            <person name="Kilian B."/>
            <person name="Quintais L.T."/>
            <person name="Guerra-Assuncao J.A."/>
            <person name="Zhou Y."/>
            <person name="Gu Y."/>
            <person name="Yen J."/>
            <person name="Vogel J.H."/>
            <person name="Eyre T."/>
            <person name="Redmond S."/>
            <person name="Banerjee R."/>
            <person name="Chi J."/>
            <person name="Fu B."/>
            <person name="Langley E."/>
            <person name="Maguire S.F."/>
            <person name="Laird G.K."/>
            <person name="Lloyd D."/>
            <person name="Kenyon E."/>
            <person name="Donaldson S."/>
            <person name="Sehra H."/>
            <person name="Almeida-King J."/>
            <person name="Loveland J."/>
            <person name="Trevanion S."/>
            <person name="Jones M."/>
            <person name="Quail M."/>
            <person name="Willey D."/>
            <person name="Hunt A."/>
            <person name="Burton J."/>
            <person name="Sims S."/>
            <person name="McLay K."/>
            <person name="Plumb B."/>
            <person name="Davis J."/>
            <person name="Clee C."/>
            <person name="Oliver K."/>
            <person name="Clark R."/>
            <person name="Riddle C."/>
            <person name="Elliot D."/>
            <person name="Threadgold G."/>
            <person name="Harden G."/>
            <person name="Ware D."/>
            <person name="Begum S."/>
            <person name="Mortimore B."/>
            <person name="Kerry G."/>
            <person name="Heath P."/>
            <person name="Phillimore B."/>
            <person name="Tracey A."/>
            <person name="Corby N."/>
            <person name="Dunn M."/>
            <person name="Johnson C."/>
            <person name="Wood J."/>
            <person name="Clark S."/>
            <person name="Pelan S."/>
            <person name="Griffiths G."/>
            <person name="Smith M."/>
            <person name="Glithero R."/>
            <person name="Howden P."/>
            <person name="Barker N."/>
            <person name="Lloyd C."/>
            <person name="Stevens C."/>
            <person name="Harley J."/>
            <person name="Holt K."/>
            <person name="Panagiotidis G."/>
            <person name="Lovell J."/>
            <person name="Beasley H."/>
            <person name="Henderson C."/>
            <person name="Gordon D."/>
            <person name="Auger K."/>
            <person name="Wright D."/>
            <person name="Collins J."/>
            <person name="Raisen C."/>
            <person name="Dyer L."/>
            <person name="Leung K."/>
            <person name="Robertson L."/>
            <person name="Ambridge K."/>
            <person name="Leongamornlert D."/>
            <person name="McGuire S."/>
            <person name="Gilderthorp R."/>
            <person name="Griffiths C."/>
            <person name="Manthravadi D."/>
            <person name="Nichol S."/>
            <person name="Barker G."/>
            <person name="Whitehead S."/>
            <person name="Kay M."/>
            <person name="Brown J."/>
            <person name="Murnane C."/>
            <person name="Gray E."/>
            <person name="Humphries M."/>
            <person name="Sycamore N."/>
            <person name="Barker D."/>
            <person name="Saunders D."/>
            <person name="Wallis J."/>
            <person name="Babbage A."/>
            <person name="Hammond S."/>
            <person name="Mashreghi-Mohammadi M."/>
            <person name="Barr L."/>
            <person name="Martin S."/>
            <person name="Wray P."/>
            <person name="Ellington A."/>
            <person name="Matthews N."/>
            <person name="Ellwood M."/>
            <person name="Woodmansey R."/>
            <person name="Clark G."/>
            <person name="Cooper J."/>
            <person name="Tromans A."/>
            <person name="Grafham D."/>
            <person name="Skuce C."/>
            <person name="Pandian R."/>
            <person name="Andrews R."/>
            <person name="Harrison E."/>
            <person name="Kimberley A."/>
            <person name="Garnett J."/>
            <person name="Fosker N."/>
            <person name="Hall R."/>
            <person name="Garner P."/>
            <person name="Kelly D."/>
            <person name="Bird C."/>
            <person name="Palmer S."/>
            <person name="Gehring I."/>
            <person name="Berger A."/>
            <person name="Dooley C.M."/>
            <person name="Ersan-Urun Z."/>
            <person name="Eser C."/>
            <person name="Geiger H."/>
            <person name="Geisler M."/>
            <person name="Karotki L."/>
            <person name="Kirn A."/>
            <person name="Konantz J."/>
            <person name="Konantz M."/>
            <person name="Oberlander M."/>
            <person name="Rudolph-Geiger S."/>
            <person name="Teucke M."/>
            <person name="Lanz C."/>
            <person name="Raddatz G."/>
            <person name="Osoegawa K."/>
            <person name="Zhu B."/>
            <person name="Rapp A."/>
            <person name="Widaa S."/>
            <person name="Langford C."/>
            <person name="Yang F."/>
            <person name="Schuster S.C."/>
            <person name="Carter N.P."/>
            <person name="Harrow J."/>
            <person name="Ning Z."/>
            <person name="Herrero J."/>
            <person name="Searle S.M."/>
            <person name="Enright A."/>
            <person name="Geisler R."/>
            <person name="Plasterk R.H."/>
            <person name="Lee C."/>
            <person name="Westerfield M."/>
            <person name="de Jong P.J."/>
            <person name="Zon L.I."/>
            <person name="Postlethwait J.H."/>
            <person name="Nusslein-Volhard C."/>
            <person name="Hubbard T.J."/>
            <person name="Roest Crollius H."/>
            <person name="Rogers J."/>
            <person name="Stemple D.L."/>
        </authorList>
    </citation>
    <scope>NUCLEOTIDE SEQUENCE [LARGE SCALE GENOMIC DNA]</scope>
    <source>
        <strain>Tuebingen</strain>
    </source>
</reference>
<reference key="2">
    <citation type="submission" date="2003-10" db="EMBL/GenBank/DDBJ databases">
        <authorList>
            <consortium name="NIH - Zebrafish Gene Collection (ZGC) project"/>
        </authorList>
    </citation>
    <scope>NUCLEOTIDE SEQUENCE [LARGE SCALE MRNA]</scope>
    <source>
        <tissue>Retina</tissue>
    </source>
</reference>
<organism>
    <name type="scientific">Danio rerio</name>
    <name type="common">Zebrafish</name>
    <name type="synonym">Brachydanio rerio</name>
    <dbReference type="NCBI Taxonomy" id="7955"/>
    <lineage>
        <taxon>Eukaryota</taxon>
        <taxon>Metazoa</taxon>
        <taxon>Chordata</taxon>
        <taxon>Craniata</taxon>
        <taxon>Vertebrata</taxon>
        <taxon>Euteleostomi</taxon>
        <taxon>Actinopterygii</taxon>
        <taxon>Neopterygii</taxon>
        <taxon>Teleostei</taxon>
        <taxon>Ostariophysi</taxon>
        <taxon>Cypriniformes</taxon>
        <taxon>Danionidae</taxon>
        <taxon>Danioninae</taxon>
        <taxon>Danio</taxon>
    </lineage>
</organism>
<feature type="signal peptide" evidence="2">
    <location>
        <begin position="1"/>
        <end position="21"/>
    </location>
</feature>
<feature type="chain" id="PRO_0000417023" description="Secretogranin-3">
    <location>
        <begin position="22"/>
        <end position="478"/>
    </location>
</feature>
<feature type="region of interest" description="Disordered" evidence="3">
    <location>
        <begin position="22"/>
        <end position="126"/>
    </location>
</feature>
<feature type="region of interest" description="Disordered" evidence="3">
    <location>
        <begin position="208"/>
        <end position="287"/>
    </location>
</feature>
<feature type="compositionally biased region" description="Basic and acidic residues" evidence="3">
    <location>
        <begin position="28"/>
        <end position="42"/>
    </location>
</feature>
<feature type="compositionally biased region" description="Acidic residues" evidence="3">
    <location>
        <begin position="63"/>
        <end position="74"/>
    </location>
</feature>
<feature type="compositionally biased region" description="Basic and acidic residues" evidence="3">
    <location>
        <begin position="97"/>
        <end position="120"/>
    </location>
</feature>
<feature type="compositionally biased region" description="Acidic residues" evidence="3">
    <location>
        <begin position="235"/>
        <end position="259"/>
    </location>
</feature>
<feature type="sequence conflict" description="In Ref. 2; AAH59577." evidence="4" ref="2">
    <original>HIN</original>
    <variation>DIS</variation>
    <location>
        <begin position="18"/>
        <end position="20"/>
    </location>
</feature>
<feature type="sequence conflict" description="In Ref. 2; AAH59577." evidence="4" ref="2">
    <original>T</original>
    <variation>A</variation>
    <location>
        <position position="106"/>
    </location>
</feature>
<proteinExistence type="evidence at transcript level"/>
<sequence>MASKRLGFVVVLALVCQHINAFPTPAGPDDKYNRELTEEKPLEQQIAEADSIRKTESKPTPPAEEETNSEDDDITFLKALAEKSKESNNETPISDSANERLGADDTDSTKNRRLADDYDSTKNGMDYKYQDDPESFRQLDGTPLTAQDIVQKIANKIYEEDDRGVFDRIVSKLLKLGLITDSQAETLEYEVAEALQDLITKNAKDNMIGDRSVDYPVSAAKDTQDEEDRPSPRFDEEDEVENEGGDDANGDEPQEEESRDDTVRSDDSWDAVSDGNDRNELNPEDGLQDLQFFPNFYRLLKSLDSEQDKEERETLITIMKTLIDFVKMMVKYGTITPEEGVTYLENLDAMIALQTKNKLGKSLVPLSITPPTGKAADDDDNTKTEAAKMQKEYESLKDSTKDVQTAAEISHPGKSESYLEAIRKNIEWLKKHNKEGNKEDYDLSKLRDFMDQQVDSYIDKGILEKDEGDVIKRIYGSL</sequence>
<keyword id="KW-0165">Cleavage on pair of basic residues</keyword>
<keyword id="KW-0968">Cytoplasmic vesicle</keyword>
<keyword id="KW-0472">Membrane</keyword>
<keyword id="KW-1185">Reference proteome</keyword>
<keyword id="KW-0964">Secreted</keyword>
<keyword id="KW-0732">Signal</keyword>
<gene>
    <name type="primary">scg3</name>
    <name type="ORF">si:ch211-12a1.3</name>
    <name type="ORF">zgc:73236</name>
</gene>